<keyword id="KW-0165">Cleavage on pair of basic residues</keyword>
<keyword id="KW-1015">Disulfide bond</keyword>
<keyword id="KW-0325">Glycoprotein</keyword>
<keyword id="KW-0339">Growth factor</keyword>
<keyword id="KW-0446">Lipid-binding</keyword>
<keyword id="KW-0481">Metalloenzyme inhibitor</keyword>
<keyword id="KW-0483">Metalloprotease inhibitor</keyword>
<keyword id="KW-0646">Protease inhibitor</keyword>
<keyword id="KW-0964">Secreted</keyword>
<keyword id="KW-0732">Signal</keyword>
<keyword id="KW-0800">Toxin</keyword>
<name>NGFV1_TROCA</name>
<comment type="function">
    <text evidence="2 3">Nerve growth factor is important for the development and maintenance of the sympathetic and sensory nervous systems. It stimulates division and differentiation of sympathetic and embryonic sensory neurons as well as basal forebrain cholinergic neurons in the brain. Its relevance in the snake venom is not clear. However, it has been shown to inhibit metalloproteinase-dependent proteolysis of platelet glycoprotein Ib alpha, suggesting a metalloproteinase inhibition to prevent metalloprotease autodigestion and/or protection against prey proteases (By similarity). Binds a lipid between the two protein chains in the homodimer. The lipid-bound form promotes histamine relase from mouse mast cells, contrary to the lipid-free form (By similarity).</text>
</comment>
<comment type="subunit">
    <text evidence="2">Homodimer; non-covalently linked.</text>
</comment>
<comment type="subcellular location">
    <subcellularLocation>
        <location evidence="2">Secreted</location>
    </subcellularLocation>
</comment>
<comment type="tissue specificity">
    <text>Expressed by the venom gland.</text>
</comment>
<comment type="similarity">
    <text evidence="6">Belongs to the NGF-beta family.</text>
</comment>
<feature type="signal peptide" evidence="4">
    <location>
        <begin position="1"/>
        <end position="18"/>
    </location>
</feature>
<feature type="propeptide" id="PRO_0000043317" evidence="1">
    <location>
        <begin position="19"/>
        <end position="125"/>
    </location>
</feature>
<feature type="chain" id="PRO_0000043318" description="Venom nerve growth factor 1">
    <location>
        <begin position="126"/>
        <end position="245"/>
    </location>
</feature>
<feature type="region of interest" description="Disordered" evidence="5">
    <location>
        <begin position="47"/>
        <end position="69"/>
    </location>
</feature>
<feature type="compositionally biased region" description="Basic and acidic residues" evidence="5">
    <location>
        <begin position="47"/>
        <end position="66"/>
    </location>
</feature>
<feature type="glycosylation site" description="N-linked (GlcNAc...) asparagine" evidence="4">
    <location>
        <position position="148"/>
    </location>
</feature>
<feature type="glycosylation site" description="N-linked (GlcNAc...) asparagine" evidence="4">
    <location>
        <position position="151"/>
    </location>
</feature>
<feature type="disulfide bond" evidence="2">
    <location>
        <begin position="139"/>
        <end position="206"/>
    </location>
</feature>
<feature type="disulfide bond" evidence="2">
    <location>
        <begin position="182"/>
        <end position="234"/>
    </location>
</feature>
<feature type="disulfide bond" evidence="2">
    <location>
        <begin position="194"/>
        <end position="236"/>
    </location>
</feature>
<dbReference type="EMBL" id="DQ181917">
    <property type="protein sequence ID" value="ABA60129.1"/>
    <property type="molecule type" value="mRNA"/>
</dbReference>
<dbReference type="SMR" id="Q3HXX8"/>
<dbReference type="GO" id="GO:0030424">
    <property type="term" value="C:axon"/>
    <property type="evidence" value="ECO:0007669"/>
    <property type="project" value="TreeGrafter"/>
</dbReference>
<dbReference type="GO" id="GO:0030425">
    <property type="term" value="C:dendrite"/>
    <property type="evidence" value="ECO:0007669"/>
    <property type="project" value="TreeGrafter"/>
</dbReference>
<dbReference type="GO" id="GO:0005615">
    <property type="term" value="C:extracellular space"/>
    <property type="evidence" value="ECO:0007669"/>
    <property type="project" value="TreeGrafter"/>
</dbReference>
<dbReference type="GO" id="GO:0008021">
    <property type="term" value="C:synaptic vesicle"/>
    <property type="evidence" value="ECO:0007669"/>
    <property type="project" value="TreeGrafter"/>
</dbReference>
<dbReference type="GO" id="GO:0008083">
    <property type="term" value="F:growth factor activity"/>
    <property type="evidence" value="ECO:0007669"/>
    <property type="project" value="UniProtKB-KW"/>
</dbReference>
<dbReference type="GO" id="GO:0008289">
    <property type="term" value="F:lipid binding"/>
    <property type="evidence" value="ECO:0007669"/>
    <property type="project" value="UniProtKB-KW"/>
</dbReference>
<dbReference type="GO" id="GO:0008191">
    <property type="term" value="F:metalloendopeptidase inhibitor activity"/>
    <property type="evidence" value="ECO:0000250"/>
    <property type="project" value="UniProtKB"/>
</dbReference>
<dbReference type="GO" id="GO:0005163">
    <property type="term" value="F:nerve growth factor receptor binding"/>
    <property type="evidence" value="ECO:0007669"/>
    <property type="project" value="TreeGrafter"/>
</dbReference>
<dbReference type="GO" id="GO:0090729">
    <property type="term" value="F:toxin activity"/>
    <property type="evidence" value="ECO:0007669"/>
    <property type="project" value="UniProtKB-KW"/>
</dbReference>
<dbReference type="GO" id="GO:0007169">
    <property type="term" value="P:cell surface receptor protein tyrosine kinase signaling pathway"/>
    <property type="evidence" value="ECO:0007669"/>
    <property type="project" value="TreeGrafter"/>
</dbReference>
<dbReference type="GO" id="GO:0050804">
    <property type="term" value="P:modulation of chemical synaptic transmission"/>
    <property type="evidence" value="ECO:0007669"/>
    <property type="project" value="TreeGrafter"/>
</dbReference>
<dbReference type="GO" id="GO:0043524">
    <property type="term" value="P:negative regulation of neuron apoptotic process"/>
    <property type="evidence" value="ECO:0007669"/>
    <property type="project" value="TreeGrafter"/>
</dbReference>
<dbReference type="GO" id="GO:0021675">
    <property type="term" value="P:nerve development"/>
    <property type="evidence" value="ECO:0007669"/>
    <property type="project" value="TreeGrafter"/>
</dbReference>
<dbReference type="GO" id="GO:0038180">
    <property type="term" value="P:nerve growth factor signaling pathway"/>
    <property type="evidence" value="ECO:0007669"/>
    <property type="project" value="TreeGrafter"/>
</dbReference>
<dbReference type="GO" id="GO:0048812">
    <property type="term" value="P:neuron projection morphogenesis"/>
    <property type="evidence" value="ECO:0007669"/>
    <property type="project" value="TreeGrafter"/>
</dbReference>
<dbReference type="FunFam" id="2.10.90.10:FF:000002">
    <property type="entry name" value="Brain-derived neurotrophic factor"/>
    <property type="match status" value="1"/>
</dbReference>
<dbReference type="Gene3D" id="2.10.90.10">
    <property type="entry name" value="Cystine-knot cytokines"/>
    <property type="match status" value="1"/>
</dbReference>
<dbReference type="InterPro" id="IPR029034">
    <property type="entry name" value="Cystine-knot_cytokine"/>
</dbReference>
<dbReference type="InterPro" id="IPR020408">
    <property type="entry name" value="Nerve_growth_factor-like"/>
</dbReference>
<dbReference type="InterPro" id="IPR002072">
    <property type="entry name" value="Nerve_growth_factor-rel"/>
</dbReference>
<dbReference type="InterPro" id="IPR020425">
    <property type="entry name" value="Nerve_growth_factor_bsu"/>
</dbReference>
<dbReference type="InterPro" id="IPR019846">
    <property type="entry name" value="Nerve_growth_factor_CS"/>
</dbReference>
<dbReference type="InterPro" id="IPR020433">
    <property type="entry name" value="Venom_nerve_growth_factor"/>
</dbReference>
<dbReference type="PANTHER" id="PTHR11589:SF10">
    <property type="entry name" value="BETA-NERVE GROWTH FACTOR"/>
    <property type="match status" value="1"/>
</dbReference>
<dbReference type="PANTHER" id="PTHR11589">
    <property type="entry name" value="NERVE GROWTH FACTOR NGF -RELATED"/>
    <property type="match status" value="1"/>
</dbReference>
<dbReference type="Pfam" id="PF00243">
    <property type="entry name" value="NGF"/>
    <property type="match status" value="1"/>
</dbReference>
<dbReference type="PIRSF" id="PIRSF001789">
    <property type="entry name" value="NGF"/>
    <property type="match status" value="1"/>
</dbReference>
<dbReference type="PRINTS" id="PR00268">
    <property type="entry name" value="NGF"/>
</dbReference>
<dbReference type="PRINTS" id="PR01913">
    <property type="entry name" value="NGFBETA"/>
</dbReference>
<dbReference type="PRINTS" id="PR01917">
    <property type="entry name" value="VENOMNGF"/>
</dbReference>
<dbReference type="SMART" id="SM00140">
    <property type="entry name" value="NGF"/>
    <property type="match status" value="1"/>
</dbReference>
<dbReference type="SUPFAM" id="SSF57501">
    <property type="entry name" value="Cystine-knot cytokines"/>
    <property type="match status" value="1"/>
</dbReference>
<dbReference type="PROSITE" id="PS00248">
    <property type="entry name" value="NGF_1"/>
    <property type="match status" value="1"/>
</dbReference>
<dbReference type="PROSITE" id="PS50270">
    <property type="entry name" value="NGF_2"/>
    <property type="match status" value="1"/>
</dbReference>
<accession>Q3HXX8</accession>
<organism>
    <name type="scientific">Tropidechis carinatus</name>
    <name type="common">Australian rough-scaled snake</name>
    <dbReference type="NCBI Taxonomy" id="100989"/>
    <lineage>
        <taxon>Eukaryota</taxon>
        <taxon>Metazoa</taxon>
        <taxon>Chordata</taxon>
        <taxon>Craniata</taxon>
        <taxon>Vertebrata</taxon>
        <taxon>Euteleostomi</taxon>
        <taxon>Lepidosauria</taxon>
        <taxon>Squamata</taxon>
        <taxon>Bifurcata</taxon>
        <taxon>Unidentata</taxon>
        <taxon>Episquamata</taxon>
        <taxon>Toxicofera</taxon>
        <taxon>Serpentes</taxon>
        <taxon>Colubroidea</taxon>
        <taxon>Elapidae</taxon>
        <taxon>Notechinae</taxon>
        <taxon>Tropidechis</taxon>
    </lineage>
</organism>
<protein>
    <recommendedName>
        <fullName>Venom nerve growth factor 1</fullName>
        <shortName>v-NGF-1</shortName>
        <shortName>vNGF-1</shortName>
    </recommendedName>
</protein>
<sequence length="245" mass="27653">MSMLCYTLIIAFLIGIWAAPKSEDNVPLGSPATSDLSDTSCAQTHEGLKTSRNTDQRHPAPKKAEDQELGSAANIIVDPKLFQKRRFQSSRVLFSTQPPPLSRDEQSVEFLDNEDALNRNIRAKRETHPVHNRGEHSVCDSISVWVANKTNATDIKGNMVTVMVDVNLNNEVYMQYFFETKCRNPNPNPVPSGCRGIDSRHWNSYCTTTQAYVRALTMEGNRASWRFIRIDTACVCVIIRKTDNF</sequence>
<proteinExistence type="evidence at transcript level"/>
<evidence type="ECO:0000250" key="1"/>
<evidence type="ECO:0000250" key="2">
    <source>
        <dbReference type="UniProtKB" id="P61898"/>
    </source>
</evidence>
<evidence type="ECO:0000250" key="3">
    <source>
        <dbReference type="UniProtKB" id="P61899"/>
    </source>
</evidence>
<evidence type="ECO:0000255" key="4"/>
<evidence type="ECO:0000256" key="5">
    <source>
        <dbReference type="SAM" id="MobiDB-lite"/>
    </source>
</evidence>
<evidence type="ECO:0000305" key="6"/>
<reference key="1">
    <citation type="submission" date="2005-08" db="EMBL/GenBank/DDBJ databases">
        <title>Identification of nerve growth factor as a ubiquitous component of Australian elapid snake venoms.</title>
        <authorList>
            <person name="Earl S.T.H."/>
            <person name="St Pierre L."/>
            <person name="Birrell G.W."/>
            <person name="Wallis T.P."/>
            <person name="Masci P.P."/>
            <person name="de Jersey J."/>
            <person name="Gorman J.J."/>
            <person name="Lavin M.F."/>
        </authorList>
    </citation>
    <scope>NUCLEOTIDE SEQUENCE [MRNA]</scope>
    <source>
        <tissue>Venom gland</tissue>
    </source>
</reference>